<dbReference type="EMBL" id="CP000712">
    <property type="protein sequence ID" value="ABQ76669.1"/>
    <property type="molecule type" value="Genomic_DNA"/>
</dbReference>
<dbReference type="SMR" id="A5VXQ9"/>
<dbReference type="KEGG" id="ppf:Pput_0499"/>
<dbReference type="eggNOG" id="COG0094">
    <property type="taxonomic scope" value="Bacteria"/>
</dbReference>
<dbReference type="HOGENOM" id="CLU_061015_2_1_6"/>
<dbReference type="GO" id="GO:1990904">
    <property type="term" value="C:ribonucleoprotein complex"/>
    <property type="evidence" value="ECO:0007669"/>
    <property type="project" value="UniProtKB-KW"/>
</dbReference>
<dbReference type="GO" id="GO:0005840">
    <property type="term" value="C:ribosome"/>
    <property type="evidence" value="ECO:0007669"/>
    <property type="project" value="UniProtKB-KW"/>
</dbReference>
<dbReference type="GO" id="GO:0019843">
    <property type="term" value="F:rRNA binding"/>
    <property type="evidence" value="ECO:0007669"/>
    <property type="project" value="UniProtKB-UniRule"/>
</dbReference>
<dbReference type="GO" id="GO:0003735">
    <property type="term" value="F:structural constituent of ribosome"/>
    <property type="evidence" value="ECO:0007669"/>
    <property type="project" value="InterPro"/>
</dbReference>
<dbReference type="GO" id="GO:0000049">
    <property type="term" value="F:tRNA binding"/>
    <property type="evidence" value="ECO:0007669"/>
    <property type="project" value="UniProtKB-UniRule"/>
</dbReference>
<dbReference type="GO" id="GO:0006412">
    <property type="term" value="P:translation"/>
    <property type="evidence" value="ECO:0007669"/>
    <property type="project" value="UniProtKB-UniRule"/>
</dbReference>
<dbReference type="FunFam" id="3.30.1440.10:FF:000001">
    <property type="entry name" value="50S ribosomal protein L5"/>
    <property type="match status" value="1"/>
</dbReference>
<dbReference type="Gene3D" id="3.30.1440.10">
    <property type="match status" value="1"/>
</dbReference>
<dbReference type="HAMAP" id="MF_01333_B">
    <property type="entry name" value="Ribosomal_uL5_B"/>
    <property type="match status" value="1"/>
</dbReference>
<dbReference type="InterPro" id="IPR002132">
    <property type="entry name" value="Ribosomal_uL5"/>
</dbReference>
<dbReference type="InterPro" id="IPR020930">
    <property type="entry name" value="Ribosomal_uL5_bac-type"/>
</dbReference>
<dbReference type="InterPro" id="IPR031309">
    <property type="entry name" value="Ribosomal_uL5_C"/>
</dbReference>
<dbReference type="InterPro" id="IPR020929">
    <property type="entry name" value="Ribosomal_uL5_CS"/>
</dbReference>
<dbReference type="InterPro" id="IPR022803">
    <property type="entry name" value="Ribosomal_uL5_dom_sf"/>
</dbReference>
<dbReference type="InterPro" id="IPR031310">
    <property type="entry name" value="Ribosomal_uL5_N"/>
</dbReference>
<dbReference type="NCBIfam" id="NF000585">
    <property type="entry name" value="PRK00010.1"/>
    <property type="match status" value="1"/>
</dbReference>
<dbReference type="PANTHER" id="PTHR11994">
    <property type="entry name" value="60S RIBOSOMAL PROTEIN L11-RELATED"/>
    <property type="match status" value="1"/>
</dbReference>
<dbReference type="Pfam" id="PF00281">
    <property type="entry name" value="Ribosomal_L5"/>
    <property type="match status" value="1"/>
</dbReference>
<dbReference type="Pfam" id="PF00673">
    <property type="entry name" value="Ribosomal_L5_C"/>
    <property type="match status" value="1"/>
</dbReference>
<dbReference type="PIRSF" id="PIRSF002161">
    <property type="entry name" value="Ribosomal_L5"/>
    <property type="match status" value="1"/>
</dbReference>
<dbReference type="SUPFAM" id="SSF55282">
    <property type="entry name" value="RL5-like"/>
    <property type="match status" value="1"/>
</dbReference>
<dbReference type="PROSITE" id="PS00358">
    <property type="entry name" value="RIBOSOMAL_L5"/>
    <property type="match status" value="1"/>
</dbReference>
<accession>A5VXQ9</accession>
<keyword id="KW-0687">Ribonucleoprotein</keyword>
<keyword id="KW-0689">Ribosomal protein</keyword>
<keyword id="KW-0694">RNA-binding</keyword>
<keyword id="KW-0699">rRNA-binding</keyword>
<keyword id="KW-0820">tRNA-binding</keyword>
<sequence length="179" mass="20329">MARLKEIYRNEIAPKLKEELKLSNVMEVPRVTKITLNMGLGEAIGDKKVIEHAVADLEKITGQKPVVTFARKSIAGFKVREGWPIGVKVTLRSDKMYEFLDRLLAISLPRVRDFRGLNAKSFDGRGNYSMGVKEQIIFPEIDYDKIDALRGLDITLTTTARSDDEGRALLRAFKFPFRN</sequence>
<name>RL5_PSEP1</name>
<evidence type="ECO:0000255" key="1">
    <source>
        <dbReference type="HAMAP-Rule" id="MF_01333"/>
    </source>
</evidence>
<evidence type="ECO:0000305" key="2"/>
<organism>
    <name type="scientific">Pseudomonas putida (strain ATCC 700007 / DSM 6899 / JCM 31910 / BCRC 17059 / LMG 24140 / F1)</name>
    <dbReference type="NCBI Taxonomy" id="351746"/>
    <lineage>
        <taxon>Bacteria</taxon>
        <taxon>Pseudomonadati</taxon>
        <taxon>Pseudomonadota</taxon>
        <taxon>Gammaproteobacteria</taxon>
        <taxon>Pseudomonadales</taxon>
        <taxon>Pseudomonadaceae</taxon>
        <taxon>Pseudomonas</taxon>
    </lineage>
</organism>
<gene>
    <name evidence="1" type="primary">rplE</name>
    <name type="ordered locus">Pput_0499</name>
</gene>
<reference key="1">
    <citation type="submission" date="2007-05" db="EMBL/GenBank/DDBJ databases">
        <title>Complete sequence of Pseudomonas putida F1.</title>
        <authorList>
            <consortium name="US DOE Joint Genome Institute"/>
            <person name="Copeland A."/>
            <person name="Lucas S."/>
            <person name="Lapidus A."/>
            <person name="Barry K."/>
            <person name="Detter J.C."/>
            <person name="Glavina del Rio T."/>
            <person name="Hammon N."/>
            <person name="Israni S."/>
            <person name="Dalin E."/>
            <person name="Tice H."/>
            <person name="Pitluck S."/>
            <person name="Chain P."/>
            <person name="Malfatti S."/>
            <person name="Shin M."/>
            <person name="Vergez L."/>
            <person name="Schmutz J."/>
            <person name="Larimer F."/>
            <person name="Land M."/>
            <person name="Hauser L."/>
            <person name="Kyrpides N."/>
            <person name="Lykidis A."/>
            <person name="Parales R."/>
            <person name="Richardson P."/>
        </authorList>
    </citation>
    <scope>NUCLEOTIDE SEQUENCE [LARGE SCALE GENOMIC DNA]</scope>
    <source>
        <strain>ATCC 700007 / DSM 6899 / JCM 31910 / BCRC 17059 / LMG 24140 / F1</strain>
    </source>
</reference>
<protein>
    <recommendedName>
        <fullName evidence="1">Large ribosomal subunit protein uL5</fullName>
    </recommendedName>
    <alternativeName>
        <fullName evidence="2">50S ribosomal protein L5</fullName>
    </alternativeName>
</protein>
<feature type="chain" id="PRO_1000052802" description="Large ribosomal subunit protein uL5">
    <location>
        <begin position="1"/>
        <end position="179"/>
    </location>
</feature>
<proteinExistence type="inferred from homology"/>
<comment type="function">
    <text evidence="1">This is one of the proteins that bind and probably mediate the attachment of the 5S RNA into the large ribosomal subunit, where it forms part of the central protuberance. In the 70S ribosome it contacts protein S13 of the 30S subunit (bridge B1b), connecting the 2 subunits; this bridge is implicated in subunit movement. Contacts the P site tRNA; the 5S rRNA and some of its associated proteins might help stabilize positioning of ribosome-bound tRNAs.</text>
</comment>
<comment type="subunit">
    <text evidence="1">Part of the 50S ribosomal subunit; part of the 5S rRNA/L5/L18/L25 subcomplex. Contacts the 5S rRNA and the P site tRNA. Forms a bridge to the 30S subunit in the 70S ribosome.</text>
</comment>
<comment type="similarity">
    <text evidence="1">Belongs to the universal ribosomal protein uL5 family.</text>
</comment>